<sequence length="204" mass="23091">MSRNSAAGLENTLFQLKFTSKQLQKQANKASKEEKQETNKLKRALNENEDISRIYASNAIRKKNERLQLLKLASRVDSVASRVQTAVTMRQVSASMGQVCKGMDKALQNMNLQQITMIMDKFEQQFEDLDTSVNVYEDMGVNSDAMLVDNDKVDELMSKVADENGMELKQSAKLDNVPEIKAKEVNVDDEKEDKLAQRLRALRG</sequence>
<feature type="chain" id="PRO_0000211461" description="Vacuolar protein-sorting-associated protein 46">
    <location>
        <begin position="1"/>
        <end position="204"/>
    </location>
</feature>
<feature type="region of interest" description="Interaction with VSP24">
    <location>
        <begin position="1"/>
        <end position="103"/>
    </location>
</feature>
<feature type="region of interest" description="Interaction with VSP4">
    <location>
        <begin position="104"/>
        <end position="204"/>
    </location>
</feature>
<feature type="region of interest" description="Interaction with VTA1">
    <location>
        <begin position="176"/>
        <end position="204"/>
    </location>
</feature>
<feature type="region of interest" description="Disordered" evidence="2">
    <location>
        <begin position="185"/>
        <end position="204"/>
    </location>
</feature>
<feature type="coiled-coil region" evidence="1">
    <location>
        <begin position="9"/>
        <end position="56"/>
    </location>
</feature>
<feature type="coiled-coil region" evidence="1">
    <location>
        <begin position="109"/>
        <end position="129"/>
    </location>
</feature>
<feature type="compositionally biased region" description="Basic and acidic residues" evidence="2">
    <location>
        <begin position="185"/>
        <end position="196"/>
    </location>
</feature>
<feature type="modified residue" description="Phosphoserine" evidence="13">
    <location>
        <position position="5"/>
    </location>
</feature>
<feature type="mutagenesis site" description="Impairs sorting." evidence="9">
    <original>R</original>
    <variation>D</variation>
    <location>
        <position position="198"/>
    </location>
</feature>
<feature type="mutagenesis site" description="Impairs sorting; when associated with D-202." evidence="9">
    <original>L</original>
    <variation>D</variation>
    <location>
        <position position="199"/>
    </location>
</feature>
<feature type="mutagenesis site" description="Impairs sorting; when associated with D-199." evidence="9">
    <original>L</original>
    <variation>D</variation>
    <location>
        <position position="202"/>
    </location>
</feature>
<feature type="helix" evidence="14">
    <location>
        <begin position="186"/>
        <end position="203"/>
    </location>
</feature>
<protein>
    <recommendedName>
        <fullName>Vacuolar protein-sorting-associated protein 46</fullName>
    </recommendedName>
    <alternativeName>
        <fullName>Charged multivesicular body protein 1</fullName>
    </alternativeName>
    <alternativeName>
        <fullName>DOA4-independent degradation protein 2</fullName>
    </alternativeName>
    <alternativeName>
        <fullName>Fifty two inhibitor 1</fullName>
    </alternativeName>
</protein>
<gene>
    <name type="primary">DID2</name>
    <name type="synonym">CHM1</name>
    <name type="synonym">FTI1</name>
    <name type="synonym">VPS46</name>
    <name type="ordered locus">YKR035W-A</name>
</gene>
<accession>P69771</accession>
<accession>D6VX98</accession>
<dbReference type="EMBL" id="Z28260">
    <property type="status" value="NOT_ANNOTATED_CDS"/>
    <property type="molecule type" value="Genomic_DNA"/>
</dbReference>
<dbReference type="EMBL" id="BK006944">
    <property type="protein sequence ID" value="DAA09188.1"/>
    <property type="molecule type" value="Genomic_DNA"/>
</dbReference>
<dbReference type="RefSeq" id="NP_012961.3">
    <property type="nucleotide sequence ID" value="NM_001184309.3"/>
</dbReference>
<dbReference type="PDB" id="3GGZ">
    <property type="method" value="X-ray"/>
    <property type="resolution" value="3.80 A"/>
    <property type="chains" value="E/F/G/H=176-204"/>
</dbReference>
<dbReference type="PDB" id="5H7P">
    <property type="method" value="NMR"/>
    <property type="chains" value="B=176-204"/>
</dbReference>
<dbReference type="PDBsum" id="3GGZ"/>
<dbReference type="PDBsum" id="5H7P"/>
<dbReference type="SMR" id="P69771"/>
<dbReference type="BioGRID" id="34166">
    <property type="interactions" value="288"/>
</dbReference>
<dbReference type="DIP" id="DIP-52223N"/>
<dbReference type="FunCoup" id="P69771">
    <property type="interactions" value="816"/>
</dbReference>
<dbReference type="IntAct" id="P69771">
    <property type="interactions" value="18"/>
</dbReference>
<dbReference type="MINT" id="P69771"/>
<dbReference type="STRING" id="4932.YKR035W-A"/>
<dbReference type="TCDB" id="3.A.31.1.1">
    <property type="family name" value="the endosomal sorting complexes required for transport iii (escrt-iii) family"/>
</dbReference>
<dbReference type="iPTMnet" id="P69771"/>
<dbReference type="PaxDb" id="4932-YKR035W-A"/>
<dbReference type="PeptideAtlas" id="P69771"/>
<dbReference type="EnsemblFungi" id="YKR035W-A_mRNA">
    <property type="protein sequence ID" value="YKR035W-A"/>
    <property type="gene ID" value="YKR035W-A"/>
</dbReference>
<dbReference type="GeneID" id="853906"/>
<dbReference type="KEGG" id="sce:YKR035W-A"/>
<dbReference type="AGR" id="SGD:S000006435"/>
<dbReference type="SGD" id="S000006435">
    <property type="gene designation" value="DID2"/>
</dbReference>
<dbReference type="VEuPathDB" id="FungiDB:YKR035W-A"/>
<dbReference type="eggNOG" id="KOG3232">
    <property type="taxonomic scope" value="Eukaryota"/>
</dbReference>
<dbReference type="GeneTree" id="ENSGT00950000182832"/>
<dbReference type="HOGENOM" id="CLU_080826_0_0_1"/>
<dbReference type="InParanoid" id="P69771"/>
<dbReference type="OMA" id="QQITMVM"/>
<dbReference type="OrthoDB" id="10266568at2759"/>
<dbReference type="BioCyc" id="YEAST:G3O-32071-MONOMER"/>
<dbReference type="BioGRID-ORCS" id="853906">
    <property type="hits" value="0 hits in 10 CRISPR screens"/>
</dbReference>
<dbReference type="PRO" id="PR:P69771"/>
<dbReference type="Proteomes" id="UP000002311">
    <property type="component" value="Chromosome XI"/>
</dbReference>
<dbReference type="RNAct" id="P69771">
    <property type="molecule type" value="protein"/>
</dbReference>
<dbReference type="GO" id="GO:0005737">
    <property type="term" value="C:cytoplasm"/>
    <property type="evidence" value="ECO:0000314"/>
    <property type="project" value="SGD"/>
</dbReference>
<dbReference type="GO" id="GO:0000815">
    <property type="term" value="C:ESCRT III complex"/>
    <property type="evidence" value="ECO:0000318"/>
    <property type="project" value="GO_Central"/>
</dbReference>
<dbReference type="GO" id="GO:0005770">
    <property type="term" value="C:late endosome"/>
    <property type="evidence" value="ECO:0000314"/>
    <property type="project" value="SGD"/>
</dbReference>
<dbReference type="GO" id="GO:0005771">
    <property type="term" value="C:multivesicular body"/>
    <property type="evidence" value="ECO:0000318"/>
    <property type="project" value="GO_Central"/>
</dbReference>
<dbReference type="GO" id="GO:0032509">
    <property type="term" value="P:endosome transport via multivesicular body sorting pathway"/>
    <property type="evidence" value="ECO:0000318"/>
    <property type="project" value="GO_Central"/>
</dbReference>
<dbReference type="GO" id="GO:1904902">
    <property type="term" value="P:ESCRT III complex assembly"/>
    <property type="evidence" value="ECO:0000314"/>
    <property type="project" value="SGD"/>
</dbReference>
<dbReference type="GO" id="GO:0045324">
    <property type="term" value="P:late endosome to vacuole transport"/>
    <property type="evidence" value="ECO:0000315"/>
    <property type="project" value="SGD"/>
</dbReference>
<dbReference type="GO" id="GO:0032511">
    <property type="term" value="P:late endosome to vacuole transport via multivesicular body sorting pathway"/>
    <property type="evidence" value="ECO:0000315"/>
    <property type="project" value="SGD"/>
</dbReference>
<dbReference type="GO" id="GO:0006623">
    <property type="term" value="P:protein targeting to vacuole"/>
    <property type="evidence" value="ECO:0000315"/>
    <property type="project" value="SGD"/>
</dbReference>
<dbReference type="GO" id="GO:0015031">
    <property type="term" value="P:protein transport"/>
    <property type="evidence" value="ECO:0000318"/>
    <property type="project" value="GO_Central"/>
</dbReference>
<dbReference type="Gene3D" id="6.10.140.1230">
    <property type="match status" value="1"/>
</dbReference>
<dbReference type="InterPro" id="IPR005024">
    <property type="entry name" value="Snf7_fam"/>
</dbReference>
<dbReference type="PANTHER" id="PTHR10476">
    <property type="entry name" value="CHARGED MULTIVESICULAR BODY PROTEIN"/>
    <property type="match status" value="1"/>
</dbReference>
<dbReference type="Pfam" id="PF03357">
    <property type="entry name" value="Snf7"/>
    <property type="match status" value="1"/>
</dbReference>
<proteinExistence type="evidence at protein level"/>
<keyword id="KW-0002">3D-structure</keyword>
<keyword id="KW-0175">Coiled coil</keyword>
<keyword id="KW-0967">Endosome</keyword>
<keyword id="KW-0472">Membrane</keyword>
<keyword id="KW-0597">Phosphoprotein</keyword>
<keyword id="KW-0653">Protein transport</keyword>
<keyword id="KW-1185">Reference proteome</keyword>
<keyword id="KW-0813">Transport</keyword>
<organism>
    <name type="scientific">Saccharomyces cerevisiae (strain ATCC 204508 / S288c)</name>
    <name type="common">Baker's yeast</name>
    <dbReference type="NCBI Taxonomy" id="559292"/>
    <lineage>
        <taxon>Eukaryota</taxon>
        <taxon>Fungi</taxon>
        <taxon>Dikarya</taxon>
        <taxon>Ascomycota</taxon>
        <taxon>Saccharomycotina</taxon>
        <taxon>Saccharomycetes</taxon>
        <taxon>Saccharomycetales</taxon>
        <taxon>Saccharomycetaceae</taxon>
        <taxon>Saccharomyces</taxon>
    </lineage>
</organism>
<name>DID2_YEAST</name>
<comment type="function">
    <text evidence="3 4 6 7 8 10 11">Class E VPS protein implicated in concentration and sorting of cargo proteins of the multivesicular body (MVB) for incorporation into intralumenal vesicles. The lumenal sequestrated membrane proteins will be targeted into the vacuole after fusion of the endosome with the vacuole. Probably acts as a peripherally associated component of the ESCRT-III complex, which appears to be critical for late steps in MVB sorting, such as membrane invagination and final cargo sorting and recruits late-acting components of the sorting machinery. The MVB pathway requires the sequential function of ESCRT-O, -I,-II and -III complex assemblies. Regulates the membrane association of VPS4. Can stimulate VPS4 ATPase activity directly or via VTA1.</text>
</comment>
<comment type="subunit">
    <text evidence="6 7 8 9 10 11">Self-associates. Interacts with VPS4 and VTA1. Interacts with IST1.</text>
</comment>
<comment type="interaction">
    <interactant intactId="EBI-2053489">
        <id>P69771</id>
    </interactant>
    <interactant intactId="EBI-28245">
        <id>P53843</id>
        <label>IST1</label>
    </interactant>
    <organismsDiffer>false</organismsDiffer>
    <experiments>4</experiments>
</comment>
<comment type="interaction">
    <interactant intactId="EBI-2053489">
        <id>P69771</id>
    </interactant>
    <interactant intactId="EBI-17554">
        <id>P39929</id>
        <label>SNF7</label>
    </interactant>
    <organismsDiffer>false</organismsDiffer>
    <experiments>3</experiments>
</comment>
<comment type="interaction">
    <interactant intactId="EBI-2053489">
        <id>P69771</id>
    </interactant>
    <interactant intactId="EBI-20475">
        <id>P52917</id>
        <label>VPS4</label>
    </interactant>
    <organismsDiffer>false</organismsDiffer>
    <experiments>4</experiments>
</comment>
<comment type="interaction">
    <interactant intactId="EBI-2053489">
        <id>P69771</id>
    </interactant>
    <interactant intactId="EBI-37098">
        <id>Q06263</id>
        <label>VTA1</label>
    </interactant>
    <organismsDiffer>false</organismsDiffer>
    <experiments>3</experiments>
</comment>
<comment type="subcellular location">
    <subcellularLocation>
        <location>Endosome membrane</location>
        <topology>Peripheral membrane protein</topology>
    </subcellularLocation>
    <subcellularLocation>
        <location>Endomembrane system</location>
        <topology>Peripheral membrane protein</topology>
    </subcellularLocation>
    <text>Endosomal and other punctate structures.</text>
</comment>
<comment type="miscellaneous">
    <text evidence="5">Present with 2440 molecules/cell in log phase SD medium.</text>
</comment>
<comment type="similarity">
    <text evidence="12">Belongs to the SNF7 family.</text>
</comment>
<reference key="1">
    <citation type="journal article" date="1994" name="Nature">
        <title>Complete DNA sequence of yeast chromosome XI.</title>
        <authorList>
            <person name="Dujon B."/>
            <person name="Alexandraki D."/>
            <person name="Andre B."/>
            <person name="Ansorge W."/>
            <person name="Baladron V."/>
            <person name="Ballesta J.P.G."/>
            <person name="Banrevi A."/>
            <person name="Bolle P.-A."/>
            <person name="Bolotin-Fukuhara M."/>
            <person name="Bossier P."/>
            <person name="Bou G."/>
            <person name="Boyer J."/>
            <person name="Buitrago M.J."/>
            <person name="Cheret G."/>
            <person name="Colleaux L."/>
            <person name="Daignan-Fornier B."/>
            <person name="del Rey F."/>
            <person name="Dion C."/>
            <person name="Domdey H."/>
            <person name="Duesterhoeft A."/>
            <person name="Duesterhus S."/>
            <person name="Entian K.-D."/>
            <person name="Erfle H."/>
            <person name="Esteban P.F."/>
            <person name="Feldmann H."/>
            <person name="Fernandes L."/>
            <person name="Fobo G.M."/>
            <person name="Fritz C."/>
            <person name="Fukuhara H."/>
            <person name="Gabel C."/>
            <person name="Gaillon L."/>
            <person name="Garcia-Cantalejo J.M."/>
            <person name="Garcia-Ramirez J.J."/>
            <person name="Gent M.E."/>
            <person name="Ghazvini M."/>
            <person name="Goffeau A."/>
            <person name="Gonzalez A."/>
            <person name="Grothues D."/>
            <person name="Guerreiro P."/>
            <person name="Hegemann J.H."/>
            <person name="Hewitt N."/>
            <person name="Hilger F."/>
            <person name="Hollenberg C.P."/>
            <person name="Horaitis O."/>
            <person name="Indge K.J."/>
            <person name="Jacquier A."/>
            <person name="James C.M."/>
            <person name="Jauniaux J.-C."/>
            <person name="Jimenez A."/>
            <person name="Keuchel H."/>
            <person name="Kirchrath L."/>
            <person name="Kleine K."/>
            <person name="Koetter P."/>
            <person name="Legrain P."/>
            <person name="Liebl S."/>
            <person name="Louis E.J."/>
            <person name="Maia e Silva A."/>
            <person name="Marck C."/>
            <person name="Monnier A.-L."/>
            <person name="Moestl D."/>
            <person name="Mueller S."/>
            <person name="Obermaier B."/>
            <person name="Oliver S.G."/>
            <person name="Pallier C."/>
            <person name="Pascolo S."/>
            <person name="Pfeiffer F."/>
            <person name="Philippsen P."/>
            <person name="Planta R.J."/>
            <person name="Pohl F.M."/>
            <person name="Pohl T.M."/>
            <person name="Poehlmann R."/>
            <person name="Portetelle D."/>
            <person name="Purnelle B."/>
            <person name="Puzos V."/>
            <person name="Ramezani Rad M."/>
            <person name="Rasmussen S.W."/>
            <person name="Remacha M.A."/>
            <person name="Revuelta J.L."/>
            <person name="Richard G.-F."/>
            <person name="Rieger M."/>
            <person name="Rodrigues-Pousada C."/>
            <person name="Rose M."/>
            <person name="Rupp T."/>
            <person name="Santos M.A."/>
            <person name="Schwager C."/>
            <person name="Sensen C."/>
            <person name="Skala J."/>
            <person name="Soares H."/>
            <person name="Sor F."/>
            <person name="Stegemann J."/>
            <person name="Tettelin H."/>
            <person name="Thierry A."/>
            <person name="Tzermia M."/>
            <person name="Urrestarazu L.A."/>
            <person name="van Dyck L."/>
            <person name="van Vliet-Reedijk J.C."/>
            <person name="Valens M."/>
            <person name="Vandenbol M."/>
            <person name="Vilela C."/>
            <person name="Vissers S."/>
            <person name="von Wettstein D."/>
            <person name="Voss H."/>
            <person name="Wiemann S."/>
            <person name="Xu G."/>
            <person name="Zimmermann J."/>
            <person name="Haasemann M."/>
            <person name="Becker I."/>
            <person name="Mewes H.-W."/>
        </authorList>
    </citation>
    <scope>NUCLEOTIDE SEQUENCE [LARGE SCALE GENOMIC DNA]</scope>
    <source>
        <strain>ATCC 204508 / S288c</strain>
    </source>
</reference>
<reference key="2">
    <citation type="journal article" date="2014" name="G3 (Bethesda)">
        <title>The reference genome sequence of Saccharomyces cerevisiae: Then and now.</title>
        <authorList>
            <person name="Engel S.R."/>
            <person name="Dietrich F.S."/>
            <person name="Fisk D.G."/>
            <person name="Binkley G."/>
            <person name="Balakrishnan R."/>
            <person name="Costanzo M.C."/>
            <person name="Dwight S.S."/>
            <person name="Hitz B.C."/>
            <person name="Karra K."/>
            <person name="Nash R.S."/>
            <person name="Weng S."/>
            <person name="Wong E.D."/>
            <person name="Lloyd P."/>
            <person name="Skrzypek M.S."/>
            <person name="Miyasato S.R."/>
            <person name="Simison M."/>
            <person name="Cherry J.M."/>
        </authorList>
    </citation>
    <scope>GENOME REANNOTATION</scope>
    <source>
        <strain>ATCC 204508 / S288c</strain>
    </source>
</reference>
<reference key="3">
    <citation type="journal article" date="2000" name="Mol. Biol. Cell">
        <title>The Doa4 deubiquitinating enzyme is functionally linked to the vacuolar protein-sorting and endocytic pathways.</title>
        <authorList>
            <person name="Amerik A.Y."/>
            <person name="Nowak J."/>
            <person name="Swaminathan S."/>
            <person name="Hochstrasser M."/>
        </authorList>
    </citation>
    <scope>FUNCTION</scope>
    <scope>SUBCELLULAR LOCATION</scope>
</reference>
<reference key="4">
    <citation type="journal article" date="2001" name="J. Cell Sci.">
        <title>CHMP1 functions as a member of a newly defined family of vesicle trafficking proteins.</title>
        <authorList>
            <person name="Howard T.L."/>
            <person name="Stauffer D.R."/>
            <person name="Degnin C.R."/>
            <person name="Hollenberg S.M."/>
        </authorList>
    </citation>
    <scope>FUNCTION</scope>
</reference>
<reference key="5">
    <citation type="journal article" date="2003" name="Nature">
        <title>Global analysis of protein localization in budding yeast.</title>
        <authorList>
            <person name="Huh W.-K."/>
            <person name="Falvo J.V."/>
            <person name="Gerke L.C."/>
            <person name="Carroll A.S."/>
            <person name="Howson R.W."/>
            <person name="Weissman J.S."/>
            <person name="O'Shea E.K."/>
        </authorList>
    </citation>
    <scope>SUBCELLULAR LOCATION [LARGE SCALE ANALYSIS]</scope>
</reference>
<reference key="6">
    <citation type="journal article" date="2003" name="Nature">
        <title>Global analysis of protein expression in yeast.</title>
        <authorList>
            <person name="Ghaemmaghami S."/>
            <person name="Huh W.-K."/>
            <person name="Bower K."/>
            <person name="Howson R.W."/>
            <person name="Belle A."/>
            <person name="Dephoure N."/>
            <person name="O'Shea E.K."/>
            <person name="Weissman J.S."/>
        </authorList>
    </citation>
    <scope>LEVEL OF PROTEIN EXPRESSION [LARGE SCALE ANALYSIS]</scope>
</reference>
<reference key="7">
    <citation type="journal article" date="2004" name="Traffic">
        <title>Protein-protein interactions of ESCRT complexes in the yeast Saccharomyces cerevisiae.</title>
        <authorList>
            <person name="Bowers K."/>
            <person name="Lottridge J."/>
            <person name="Helliwell S.B."/>
            <person name="Goldthwaite L.M."/>
            <person name="Luzio J.P."/>
            <person name="Stevens T.H."/>
        </authorList>
    </citation>
    <scope>FUNCTION</scope>
    <scope>SELF-ASSOCIATION</scope>
    <scope>INTERACTION WITH VPS4 AND VTA1</scope>
</reference>
<reference key="8">
    <citation type="journal article" date="2006" name="J. Cell Biol.">
        <title>Did2 coordinates Vps4-mediated dissociation of ESCRT-III from endosomes.</title>
        <authorList>
            <person name="Nickerson D.P."/>
            <person name="West M."/>
            <person name="Odorizzi G."/>
        </authorList>
    </citation>
    <scope>FUNCTION</scope>
    <scope>INTERACTION WITH VPS4 AND VPS24</scope>
</reference>
<reference key="9">
    <citation type="journal article" date="2006" name="J. Cell Biol.">
        <authorList>
            <person name="Nickerson D.P."/>
            <person name="West M."/>
            <person name="Odorizzi G."/>
        </authorList>
    </citation>
    <scope>ERRATUM OF PUBMED:17130288</scope>
</reference>
<reference key="10">
    <citation type="journal article" date="2006" name="Proc. Natl. Acad. Sci. U.S.A.">
        <title>Vta1p and Vps46p regulate the membrane association and ATPase activity of Vps4p at the yeast multivesicular body.</title>
        <authorList>
            <person name="Lottridge J.M."/>
            <person name="Flannery A.R."/>
            <person name="Vincelli J.L."/>
            <person name="Stevens T.H."/>
        </authorList>
    </citation>
    <scope>FUNCTION</scope>
    <scope>INTERACTION WITH VSP4 AND VTA1</scope>
</reference>
<reference key="11">
    <citation type="journal article" date="2007" name="Nature">
        <title>Structural basis for selective recognition of ESCRT-III by the AAA ATPase Vps4.</title>
        <authorList>
            <person name="Obita T."/>
            <person name="Saksena S."/>
            <person name="Ghazi-Tabatabai S."/>
            <person name="Gill D.J."/>
            <person name="Perisic O."/>
            <person name="Emr S.D."/>
            <person name="Williams R.L."/>
        </authorList>
    </citation>
    <scope>INTERACTION WITH VSP4</scope>
    <scope>MUTAGENESIS OF ARG-198; LEU-199 AND LEU-202</scope>
</reference>
<reference key="12">
    <citation type="journal article" date="2008" name="Dev. Cell">
        <title>ESCRT-III family members stimulate Vps4 ATPase activity directly or via Vta1.</title>
        <authorList>
            <person name="Azmi I.F."/>
            <person name="Davies B.A."/>
            <person name="Xiao J."/>
            <person name="Babst M."/>
            <person name="Xu Z."/>
            <person name="Katzmann D.J."/>
        </authorList>
    </citation>
    <scope>FUNCTION</scope>
    <scope>INTERACTION WITH VTA1</scope>
</reference>
<reference key="13">
    <citation type="journal article" date="2008" name="Mol. Biol. Cell">
        <title>Novel Ist1-Did2 complex functions at a late step in multivesicular body sorting.</title>
        <authorList>
            <person name="Rue S.M."/>
            <person name="Mattei S."/>
            <person name="Saksena S."/>
            <person name="Emr S.D."/>
        </authorList>
    </citation>
    <scope>FUNCTION</scope>
    <scope>INTERACTION WITH IST1</scope>
</reference>
<reference key="14">
    <citation type="journal article" date="2009" name="Science">
        <title>Global analysis of Cdk1 substrate phosphorylation sites provides insights into evolution.</title>
        <authorList>
            <person name="Holt L.J."/>
            <person name="Tuch B.B."/>
            <person name="Villen J."/>
            <person name="Johnson A.D."/>
            <person name="Gygi S.P."/>
            <person name="Morgan D.O."/>
        </authorList>
    </citation>
    <scope>PHOSPHORYLATION [LARGE SCALE ANALYSIS] AT SER-5</scope>
    <scope>IDENTIFICATION BY MASS SPECTROMETRY [LARGE SCALE ANALYSIS]</scope>
</reference>
<evidence type="ECO:0000255" key="1"/>
<evidence type="ECO:0000256" key="2">
    <source>
        <dbReference type="SAM" id="MobiDB-lite"/>
    </source>
</evidence>
<evidence type="ECO:0000269" key="3">
    <source>
    </source>
</evidence>
<evidence type="ECO:0000269" key="4">
    <source>
    </source>
</evidence>
<evidence type="ECO:0000269" key="5">
    <source>
    </source>
</evidence>
<evidence type="ECO:0000269" key="6">
    <source>
    </source>
</evidence>
<evidence type="ECO:0000269" key="7">
    <source>
    </source>
</evidence>
<evidence type="ECO:0000269" key="8">
    <source>
    </source>
</evidence>
<evidence type="ECO:0000269" key="9">
    <source>
    </source>
</evidence>
<evidence type="ECO:0000269" key="10">
    <source>
    </source>
</evidence>
<evidence type="ECO:0000269" key="11">
    <source>
    </source>
</evidence>
<evidence type="ECO:0000305" key="12"/>
<evidence type="ECO:0007744" key="13">
    <source>
    </source>
</evidence>
<evidence type="ECO:0007829" key="14">
    <source>
        <dbReference type="PDB" id="5H7P"/>
    </source>
</evidence>